<keyword id="KW-0067">ATP-binding</keyword>
<keyword id="KW-0418">Kinase</keyword>
<keyword id="KW-0460">Magnesium</keyword>
<keyword id="KW-0479">Metal-binding</keyword>
<keyword id="KW-0547">Nucleotide-binding</keyword>
<keyword id="KW-0784">Thiamine biosynthesis</keyword>
<keyword id="KW-0808">Transferase</keyword>
<protein>
    <recommendedName>
        <fullName evidence="1">Hydroxyethylthiazole kinase 2</fullName>
        <ecNumber evidence="1">2.7.1.50</ecNumber>
    </recommendedName>
    <alternativeName>
        <fullName evidence="1">4-methyl-5-beta-hydroxyethylthiazole kinase 2</fullName>
        <shortName evidence="1">TH kinase 2</shortName>
        <shortName evidence="1">Thz kinase 2</shortName>
    </alternativeName>
</protein>
<proteinExistence type="inferred from homology"/>
<dbReference type="EC" id="2.7.1.50" evidence="1"/>
<dbReference type="EMBL" id="CP001033">
    <property type="protein sequence ID" value="ACB89925.1"/>
    <property type="molecule type" value="Genomic_DNA"/>
</dbReference>
<dbReference type="SMR" id="B2INA6"/>
<dbReference type="KEGG" id="spw:SPCG_0673"/>
<dbReference type="HOGENOM" id="CLU_019943_0_0_9"/>
<dbReference type="UniPathway" id="UPA00060">
    <property type="reaction ID" value="UER00139"/>
</dbReference>
<dbReference type="GO" id="GO:0005524">
    <property type="term" value="F:ATP binding"/>
    <property type="evidence" value="ECO:0007669"/>
    <property type="project" value="UniProtKB-UniRule"/>
</dbReference>
<dbReference type="GO" id="GO:0004417">
    <property type="term" value="F:hydroxyethylthiazole kinase activity"/>
    <property type="evidence" value="ECO:0007669"/>
    <property type="project" value="UniProtKB-UniRule"/>
</dbReference>
<dbReference type="GO" id="GO:0000287">
    <property type="term" value="F:magnesium ion binding"/>
    <property type="evidence" value="ECO:0007669"/>
    <property type="project" value="UniProtKB-UniRule"/>
</dbReference>
<dbReference type="GO" id="GO:0009228">
    <property type="term" value="P:thiamine biosynthetic process"/>
    <property type="evidence" value="ECO:0007669"/>
    <property type="project" value="UniProtKB-KW"/>
</dbReference>
<dbReference type="GO" id="GO:0009229">
    <property type="term" value="P:thiamine diphosphate biosynthetic process"/>
    <property type="evidence" value="ECO:0007669"/>
    <property type="project" value="UniProtKB-UniRule"/>
</dbReference>
<dbReference type="CDD" id="cd01170">
    <property type="entry name" value="THZ_kinase"/>
    <property type="match status" value="1"/>
</dbReference>
<dbReference type="Gene3D" id="3.40.1190.20">
    <property type="match status" value="1"/>
</dbReference>
<dbReference type="HAMAP" id="MF_00228">
    <property type="entry name" value="Thz_kinase"/>
    <property type="match status" value="1"/>
</dbReference>
<dbReference type="InterPro" id="IPR000417">
    <property type="entry name" value="Hyethyz_kinase"/>
</dbReference>
<dbReference type="InterPro" id="IPR029056">
    <property type="entry name" value="Ribokinase-like"/>
</dbReference>
<dbReference type="Pfam" id="PF02110">
    <property type="entry name" value="HK"/>
    <property type="match status" value="1"/>
</dbReference>
<dbReference type="PIRSF" id="PIRSF000513">
    <property type="entry name" value="Thz_kinase"/>
    <property type="match status" value="1"/>
</dbReference>
<dbReference type="PRINTS" id="PR01099">
    <property type="entry name" value="HYETHTZKNASE"/>
</dbReference>
<dbReference type="SUPFAM" id="SSF53613">
    <property type="entry name" value="Ribokinase-like"/>
    <property type="match status" value="1"/>
</dbReference>
<comment type="function">
    <text evidence="1">Catalyzes the phosphorylation of the hydroxyl group of 4-methyl-5-beta-hydroxyethylthiazole (THZ).</text>
</comment>
<comment type="catalytic activity">
    <reaction evidence="1">
        <text>5-(2-hydroxyethyl)-4-methylthiazole + ATP = 4-methyl-5-(2-phosphooxyethyl)-thiazole + ADP + H(+)</text>
        <dbReference type="Rhea" id="RHEA:24212"/>
        <dbReference type="ChEBI" id="CHEBI:15378"/>
        <dbReference type="ChEBI" id="CHEBI:17957"/>
        <dbReference type="ChEBI" id="CHEBI:30616"/>
        <dbReference type="ChEBI" id="CHEBI:58296"/>
        <dbReference type="ChEBI" id="CHEBI:456216"/>
        <dbReference type="EC" id="2.7.1.50"/>
    </reaction>
</comment>
<comment type="cofactor">
    <cofactor evidence="1">
        <name>Mg(2+)</name>
        <dbReference type="ChEBI" id="CHEBI:18420"/>
    </cofactor>
</comment>
<comment type="pathway">
    <text evidence="1">Cofactor biosynthesis; thiamine diphosphate biosynthesis; 4-methyl-5-(2-phosphoethyl)-thiazole from 5-(2-hydroxyethyl)-4-methylthiazole: step 1/1.</text>
</comment>
<comment type="similarity">
    <text evidence="1">Belongs to the Thz kinase family.</text>
</comment>
<feature type="chain" id="PRO_0000383901" description="Hydroxyethylthiazole kinase 2">
    <location>
        <begin position="1"/>
        <end position="268"/>
    </location>
</feature>
<feature type="binding site" evidence="1">
    <location>
        <position position="42"/>
    </location>
    <ligand>
        <name>substrate</name>
    </ligand>
</feature>
<feature type="binding site" evidence="1">
    <location>
        <position position="117"/>
    </location>
    <ligand>
        <name>ATP</name>
        <dbReference type="ChEBI" id="CHEBI:30616"/>
    </ligand>
</feature>
<feature type="binding site" evidence="1">
    <location>
        <position position="167"/>
    </location>
    <ligand>
        <name>ATP</name>
        <dbReference type="ChEBI" id="CHEBI:30616"/>
    </ligand>
</feature>
<feature type="binding site" evidence="1">
    <location>
        <position position="194"/>
    </location>
    <ligand>
        <name>substrate</name>
    </ligand>
</feature>
<organism>
    <name type="scientific">Streptococcus pneumoniae (strain CGSP14)</name>
    <dbReference type="NCBI Taxonomy" id="516950"/>
    <lineage>
        <taxon>Bacteria</taxon>
        <taxon>Bacillati</taxon>
        <taxon>Bacillota</taxon>
        <taxon>Bacilli</taxon>
        <taxon>Lactobacillales</taxon>
        <taxon>Streptococcaceae</taxon>
        <taxon>Streptococcus</taxon>
    </lineage>
</organism>
<reference key="1">
    <citation type="journal article" date="2009" name="BMC Genomics">
        <title>Genome evolution driven by host adaptations results in a more virulent and antimicrobial-resistant Streptococcus pneumoniae serotype 14.</title>
        <authorList>
            <person name="Ding F."/>
            <person name="Tang P."/>
            <person name="Hsu M.-H."/>
            <person name="Cui P."/>
            <person name="Hu S."/>
            <person name="Yu J."/>
            <person name="Chiu C.-H."/>
        </authorList>
    </citation>
    <scope>NUCLEOTIDE SEQUENCE [LARGE SCALE GENOMIC DNA]</scope>
    <source>
        <strain>CGSP14</strain>
    </source>
</reference>
<gene>
    <name evidence="1" type="primary">thiM2</name>
    <name type="ordered locus">SPCG_0673</name>
</gene>
<name>THIM2_STRPS</name>
<accession>B2INA6</accession>
<sequence length="268" mass="29219">MMQALTNPFPIGSSSLIHCMTNEISCEMLANGILALGCKPVMADDPREVLDFTKQSQALFINLGHLSAEKEKAIRMAALYANQSSLPMVVDAVGVTTSSIRKSLVKDLLDYRPTVLKGNMSEIRSLVGLKHHGVGVDASAKDQETEDLLQVLKDWCQTYPGMSFLVTGPKDLVVSKNQVAVLENGCTELDWITGTGDLVGALTAVFLSQGKTGFEASCLAVSYLNIAAEKIVVQGMGLEEFRYQVLNQLSLLRRDENWLDTIKGEAYE</sequence>
<evidence type="ECO:0000255" key="1">
    <source>
        <dbReference type="HAMAP-Rule" id="MF_00228"/>
    </source>
</evidence>